<name>Q0032_YEAST</name>
<gene>
    <name type="ordered locus">Q0032</name>
    <name type="ORF">ORF8</name>
</gene>
<sequence>MLMMYMLFIMMKTYPMLSYHMMSYHIMLYTIMWYMKYSTYMRLWLLYKSYFIFIFIWTNNNYNNNYWYVTMLMNTYLYYNMNIHFLTINKKFLYSL</sequence>
<reference key="1">
    <citation type="journal article" date="1998" name="FEBS Lett.">
        <title>The complete sequence of the mitochondrial genome of Saccharomyces cerevisiae.</title>
        <authorList>
            <person name="Foury F."/>
            <person name="Roganti T."/>
            <person name="Lecrenier N."/>
            <person name="Purnelle B."/>
        </authorList>
    </citation>
    <scope>NUCLEOTIDE SEQUENCE [LARGE SCALE GENOMIC DNA]</scope>
    <source>
        <strain>ATCC 96604 / S288c / FY1679</strain>
    </source>
</reference>
<reference key="2">
    <citation type="journal article" date="2014" name="G3 (Bethesda)">
        <title>The reference genome sequence of Saccharomyces cerevisiae: Then and now.</title>
        <authorList>
            <person name="Engel S.R."/>
            <person name="Dietrich F.S."/>
            <person name="Fisk D.G."/>
            <person name="Binkley G."/>
            <person name="Balakrishnan R."/>
            <person name="Costanzo M.C."/>
            <person name="Dwight S.S."/>
            <person name="Hitz B.C."/>
            <person name="Karra K."/>
            <person name="Nash R.S."/>
            <person name="Weng S."/>
            <person name="Wong E.D."/>
            <person name="Lloyd P."/>
            <person name="Skrzypek M.S."/>
            <person name="Miyasato S.R."/>
            <person name="Simison M."/>
            <person name="Cherry J.M."/>
        </authorList>
    </citation>
    <scope>GENOME REANNOTATION</scope>
    <source>
        <strain>ATCC 96604 / S288c / FY1679</strain>
    </source>
</reference>
<geneLocation type="mitochondrion"/>
<dbReference type="EMBL" id="KP263414">
    <property type="status" value="NOT_ANNOTATED_CDS"/>
    <property type="molecule type" value="Genomic_DNA"/>
</dbReference>
<dbReference type="PIR" id="S78638">
    <property type="entry name" value="S78638"/>
</dbReference>
<dbReference type="STRING" id="4932.Q0032"/>
<dbReference type="PaxDb" id="4932-Q0032"/>
<dbReference type="EnsemblFungi" id="Q0032_mRNA">
    <property type="protein sequence ID" value="Q0032"/>
    <property type="gene ID" value="Q0032"/>
</dbReference>
<dbReference type="AGR" id="SGD:S000007259"/>
<dbReference type="SGD" id="S000007259">
    <property type="gene designation" value="Q0032"/>
</dbReference>
<dbReference type="HOGENOM" id="CLU_2361358_0_0_1"/>
<dbReference type="InParanoid" id="Q9ZZX7"/>
<dbReference type="Proteomes" id="UP000002311">
    <property type="component" value="Mitochondrion"/>
</dbReference>
<dbReference type="RNAct" id="Q9ZZX7">
    <property type="molecule type" value="protein"/>
</dbReference>
<dbReference type="GO" id="GO:0005739">
    <property type="term" value="C:mitochondrion"/>
    <property type="evidence" value="ECO:0007669"/>
    <property type="project" value="UniProtKB-SubCell"/>
</dbReference>
<protein>
    <recommendedName>
        <fullName>Putative uncharacterized protein Q0032, mitochondrial</fullName>
    </recommendedName>
</protein>
<comment type="subcellular location">
    <subcellularLocation>
        <location evidence="1">Mitochondrion</location>
    </subcellularLocation>
</comment>
<comment type="caution">
    <text evidence="1">Product of a dubious gene prediction.</text>
</comment>
<accession>Q9ZZX7</accession>
<proteinExistence type="uncertain"/>
<feature type="chain" id="PRO_0000299680" description="Putative uncharacterized protein Q0032, mitochondrial">
    <location>
        <begin position="1"/>
        <end position="96"/>
    </location>
</feature>
<organism>
    <name type="scientific">Saccharomyces cerevisiae (strain ATCC 204508 / S288c)</name>
    <name type="common">Baker's yeast</name>
    <dbReference type="NCBI Taxonomy" id="559292"/>
    <lineage>
        <taxon>Eukaryota</taxon>
        <taxon>Fungi</taxon>
        <taxon>Dikarya</taxon>
        <taxon>Ascomycota</taxon>
        <taxon>Saccharomycotina</taxon>
        <taxon>Saccharomycetes</taxon>
        <taxon>Saccharomycetales</taxon>
        <taxon>Saccharomycetaceae</taxon>
        <taxon>Saccharomyces</taxon>
    </lineage>
</organism>
<evidence type="ECO:0000305" key="1"/>
<keyword id="KW-0496">Mitochondrion</keyword>
<keyword id="KW-1185">Reference proteome</keyword>